<name>HSP7E_ARATH</name>
<gene>
    <name type="primary">HSP70-5</name>
    <name type="synonym">HSP70B</name>
    <name type="ordered locus">At1g16030</name>
    <name type="ORF">T24D18.14</name>
</gene>
<evidence type="ECO:0000256" key="1">
    <source>
        <dbReference type="SAM" id="MobiDB-lite"/>
    </source>
</evidence>
<evidence type="ECO:0000269" key="2">
    <source>
    </source>
</evidence>
<evidence type="ECO:0000269" key="3">
    <source>
    </source>
</evidence>
<evidence type="ECO:0000305" key="4"/>
<comment type="function">
    <text evidence="4">In cooperation with other chaperones, Hsp70s are key components that facilitate folding of de novo synthesized proteins, assist translocation of precursor proteins into organelles, and are responsible for degradation of damaged protein under stress conditions.</text>
</comment>
<comment type="subcellular location">
    <subcellularLocation>
        <location evidence="4">Cytoplasm</location>
    </subcellularLocation>
</comment>
<comment type="induction">
    <text evidence="2 3">By heat shock. Up-regulated by virus infection.</text>
</comment>
<comment type="similarity">
    <text evidence="4">Belongs to the heat shock protein 70 (TC 1.A.33) family. DnaK subfamily.</text>
</comment>
<proteinExistence type="evidence at transcript level"/>
<feature type="chain" id="PRO_0000415424" description="Heat shock 70 kDa protein 5">
    <location>
        <begin position="1"/>
        <end position="646"/>
    </location>
</feature>
<feature type="region of interest" description="Disordered" evidence="1">
    <location>
        <begin position="626"/>
        <end position="646"/>
    </location>
</feature>
<organism>
    <name type="scientific">Arabidopsis thaliana</name>
    <name type="common">Mouse-ear cress</name>
    <dbReference type="NCBI Taxonomy" id="3702"/>
    <lineage>
        <taxon>Eukaryota</taxon>
        <taxon>Viridiplantae</taxon>
        <taxon>Streptophyta</taxon>
        <taxon>Embryophyta</taxon>
        <taxon>Tracheophyta</taxon>
        <taxon>Spermatophyta</taxon>
        <taxon>Magnoliopsida</taxon>
        <taxon>eudicotyledons</taxon>
        <taxon>Gunneridae</taxon>
        <taxon>Pentapetalae</taxon>
        <taxon>rosids</taxon>
        <taxon>malvids</taxon>
        <taxon>Brassicales</taxon>
        <taxon>Brassicaceae</taxon>
        <taxon>Camelineae</taxon>
        <taxon>Arabidopsis</taxon>
    </lineage>
</organism>
<keyword id="KW-0067">ATP-binding</keyword>
<keyword id="KW-0143">Chaperone</keyword>
<keyword id="KW-0963">Cytoplasm</keyword>
<keyword id="KW-0547">Nucleotide-binding</keyword>
<keyword id="KW-1185">Reference proteome</keyword>
<keyword id="KW-0346">Stress response</keyword>
<dbReference type="EMBL" id="AC010924">
    <property type="protein sequence ID" value="AAF18501.1"/>
    <property type="molecule type" value="Genomic_DNA"/>
</dbReference>
<dbReference type="EMBL" id="CP002684">
    <property type="protein sequence ID" value="AEE29402.1"/>
    <property type="molecule type" value="Genomic_DNA"/>
</dbReference>
<dbReference type="EMBL" id="BT001988">
    <property type="protein sequence ID" value="AAN71999.1"/>
    <property type="molecule type" value="mRNA"/>
</dbReference>
<dbReference type="EMBL" id="BT008401">
    <property type="protein sequence ID" value="AAP37760.1"/>
    <property type="molecule type" value="mRNA"/>
</dbReference>
<dbReference type="PIR" id="B86295">
    <property type="entry name" value="B86295"/>
</dbReference>
<dbReference type="RefSeq" id="NP_173055.1">
    <property type="nucleotide sequence ID" value="NM_101471.3"/>
</dbReference>
<dbReference type="SMR" id="Q9S9N1"/>
<dbReference type="BioGRID" id="23414">
    <property type="interactions" value="10"/>
</dbReference>
<dbReference type="FunCoup" id="Q9S9N1">
    <property type="interactions" value="2303"/>
</dbReference>
<dbReference type="IntAct" id="Q9S9N1">
    <property type="interactions" value="4"/>
</dbReference>
<dbReference type="MINT" id="Q9S9N1"/>
<dbReference type="STRING" id="3702.Q9S9N1"/>
<dbReference type="PaxDb" id="3702-AT1G16030.1"/>
<dbReference type="ProteomicsDB" id="230155"/>
<dbReference type="EnsemblPlants" id="AT1G16030.1">
    <property type="protein sequence ID" value="AT1G16030.1"/>
    <property type="gene ID" value="AT1G16030"/>
</dbReference>
<dbReference type="GeneID" id="838174"/>
<dbReference type="Gramene" id="AT1G16030.1">
    <property type="protein sequence ID" value="AT1G16030.1"/>
    <property type="gene ID" value="AT1G16030"/>
</dbReference>
<dbReference type="KEGG" id="ath:AT1G16030"/>
<dbReference type="Araport" id="AT1G16030"/>
<dbReference type="TAIR" id="AT1G16030">
    <property type="gene designation" value="HSP70B"/>
</dbReference>
<dbReference type="eggNOG" id="KOG0101">
    <property type="taxonomic scope" value="Eukaryota"/>
</dbReference>
<dbReference type="HOGENOM" id="CLU_005965_0_1_1"/>
<dbReference type="InParanoid" id="Q9S9N1"/>
<dbReference type="OMA" id="GANDGMP"/>
<dbReference type="PhylomeDB" id="Q9S9N1"/>
<dbReference type="PRO" id="PR:Q9S9N1"/>
<dbReference type="Proteomes" id="UP000006548">
    <property type="component" value="Chromosome 1"/>
</dbReference>
<dbReference type="ExpressionAtlas" id="Q9S9N1">
    <property type="expression patterns" value="baseline and differential"/>
</dbReference>
<dbReference type="GO" id="GO:0005829">
    <property type="term" value="C:cytosol"/>
    <property type="evidence" value="ECO:0007005"/>
    <property type="project" value="TAIR"/>
</dbReference>
<dbReference type="GO" id="GO:0009505">
    <property type="term" value="C:plant-type cell wall"/>
    <property type="evidence" value="ECO:0007005"/>
    <property type="project" value="TAIR"/>
</dbReference>
<dbReference type="GO" id="GO:0005524">
    <property type="term" value="F:ATP binding"/>
    <property type="evidence" value="ECO:0007669"/>
    <property type="project" value="UniProtKB-KW"/>
</dbReference>
<dbReference type="GO" id="GO:0140662">
    <property type="term" value="F:ATP-dependent protein folding chaperone"/>
    <property type="evidence" value="ECO:0007669"/>
    <property type="project" value="InterPro"/>
</dbReference>
<dbReference type="GO" id="GO:0009408">
    <property type="term" value="P:response to heat"/>
    <property type="evidence" value="ECO:0000270"/>
    <property type="project" value="UniProtKB"/>
</dbReference>
<dbReference type="GO" id="GO:0009615">
    <property type="term" value="P:response to virus"/>
    <property type="evidence" value="ECO:0000270"/>
    <property type="project" value="UniProtKB"/>
</dbReference>
<dbReference type="CDD" id="cd10233">
    <property type="entry name" value="ASKHA_NBD_HSP70_HSPA1"/>
    <property type="match status" value="1"/>
</dbReference>
<dbReference type="FunFam" id="2.60.34.10:FF:000002">
    <property type="entry name" value="Heat shock 70 kDa"/>
    <property type="match status" value="1"/>
</dbReference>
<dbReference type="FunFam" id="3.90.640.10:FF:000002">
    <property type="entry name" value="Heat shock 70 kDa"/>
    <property type="match status" value="1"/>
</dbReference>
<dbReference type="FunFam" id="1.20.1270.10:FF:000028">
    <property type="entry name" value="Heat shock 70 kDa protein"/>
    <property type="match status" value="1"/>
</dbReference>
<dbReference type="FunFam" id="3.30.420.40:FF:000172">
    <property type="entry name" value="Heat shock 70 kDa protein"/>
    <property type="match status" value="1"/>
</dbReference>
<dbReference type="FunFam" id="3.30.30.30:FF:000001">
    <property type="entry name" value="heat shock 70 kDa protein-like"/>
    <property type="match status" value="1"/>
</dbReference>
<dbReference type="FunFam" id="3.30.420.40:FF:000465">
    <property type="entry name" value="Heat shock cognate 70 kDa protein 2"/>
    <property type="match status" value="1"/>
</dbReference>
<dbReference type="FunFam" id="3.30.420.40:FF:000026">
    <property type="entry name" value="Heat shock protein 70"/>
    <property type="match status" value="1"/>
</dbReference>
<dbReference type="Gene3D" id="1.20.1270.10">
    <property type="match status" value="1"/>
</dbReference>
<dbReference type="Gene3D" id="3.30.30.30">
    <property type="match status" value="1"/>
</dbReference>
<dbReference type="Gene3D" id="3.30.420.40">
    <property type="match status" value="2"/>
</dbReference>
<dbReference type="Gene3D" id="3.90.640.10">
    <property type="entry name" value="Actin, Chain A, domain 4"/>
    <property type="match status" value="1"/>
</dbReference>
<dbReference type="Gene3D" id="2.60.34.10">
    <property type="entry name" value="Substrate Binding Domain Of DNAk, Chain A, domain 1"/>
    <property type="match status" value="1"/>
</dbReference>
<dbReference type="InterPro" id="IPR043129">
    <property type="entry name" value="ATPase_NBD"/>
</dbReference>
<dbReference type="InterPro" id="IPR018181">
    <property type="entry name" value="Heat_shock_70_CS"/>
</dbReference>
<dbReference type="InterPro" id="IPR029048">
    <property type="entry name" value="HSP70_C_sf"/>
</dbReference>
<dbReference type="InterPro" id="IPR029047">
    <property type="entry name" value="HSP70_peptide-bd_sf"/>
</dbReference>
<dbReference type="InterPro" id="IPR013126">
    <property type="entry name" value="Hsp_70_fam"/>
</dbReference>
<dbReference type="NCBIfam" id="NF001413">
    <property type="entry name" value="PRK00290.1"/>
    <property type="match status" value="1"/>
</dbReference>
<dbReference type="PANTHER" id="PTHR19375">
    <property type="entry name" value="HEAT SHOCK PROTEIN 70KDA"/>
    <property type="match status" value="1"/>
</dbReference>
<dbReference type="Pfam" id="PF00012">
    <property type="entry name" value="HSP70"/>
    <property type="match status" value="1"/>
</dbReference>
<dbReference type="PRINTS" id="PR00301">
    <property type="entry name" value="HEATSHOCK70"/>
</dbReference>
<dbReference type="SUPFAM" id="SSF53067">
    <property type="entry name" value="Actin-like ATPase domain"/>
    <property type="match status" value="2"/>
</dbReference>
<dbReference type="SUPFAM" id="SSF100934">
    <property type="entry name" value="Heat shock protein 70kD (HSP70), C-terminal subdomain"/>
    <property type="match status" value="1"/>
</dbReference>
<dbReference type="SUPFAM" id="SSF100920">
    <property type="entry name" value="Heat shock protein 70kD (HSP70), peptide-binding domain"/>
    <property type="match status" value="1"/>
</dbReference>
<dbReference type="PROSITE" id="PS00297">
    <property type="entry name" value="HSP70_1"/>
    <property type="match status" value="1"/>
</dbReference>
<dbReference type="PROSITE" id="PS00329">
    <property type="entry name" value="HSP70_2"/>
    <property type="match status" value="1"/>
</dbReference>
<dbReference type="PROSITE" id="PS01036">
    <property type="entry name" value="HSP70_3"/>
    <property type="match status" value="1"/>
</dbReference>
<sequence length="646" mass="70915">MATKSEKAIGIDLGTTYSCVGVWMNDRVEIIPNDQGNRTTPSYVAFTDTERLIGDAAKNQVALNPQNTVFDAKRLIGRKFSDPSVQSDILHWPFKVVSGPGEKPMIVVSYKNEEKQFSPEEISSMVLVKMKEVAEAFLGRTVKNAVVTVPAYFNDSQRQATKDAGAISGLNVLRIINEPTAAAIAYGLDKKGTKAGEKNVLIFDLGGGTFDVSLLTIEEGVFEVKATAGDTHLGGEDFDNRLVNHFVAEFRRKHKKDIAGNARALRRLRTACERAKRTLSSTAQTTIEIDSLHEGIDFYATISRARFEEMNMDLFRKCMDPVEKVLKDAKLDKSSVHDVVLVGGSTRIPKIQQLLQDFFNGKELCKSINPDEAVAYGAAVQAAILTGEGSEKVQDLLLLDVAPLSLGLETAGGVMTVLIPRNTTVPCKKEQVFSTYADNQPGVLIQVYEGERARTRDNNLLGTFELKGIPPAPRGVPQINVCFDIDANGILNVSAEDKTAGVKNQITITNDKGRLSKEEIEKMVQDAEKYKAEDEQVKKKVEAKNSLENYAYNMRNTIKDEKLAQKLTQEDKQKIEKAIDETIEWIEGNQLAEVDEFEYKLKELEGICNPIISKMYQGGAAAGGMPTDGDFSSSGAAGGPKIEEVD</sequence>
<accession>Q9S9N1</accession>
<protein>
    <recommendedName>
        <fullName>Heat shock 70 kDa protein 5</fullName>
    </recommendedName>
    <alternativeName>
        <fullName>Heat shock protein 70-5</fullName>
        <shortName>AtHsp70-5</shortName>
    </alternativeName>
    <alternativeName>
        <fullName>Heat shock protein 70b</fullName>
    </alternativeName>
</protein>
<reference key="1">
    <citation type="journal article" date="2000" name="Nature">
        <title>Sequence and analysis of chromosome 1 of the plant Arabidopsis thaliana.</title>
        <authorList>
            <person name="Theologis A."/>
            <person name="Ecker J.R."/>
            <person name="Palm C.J."/>
            <person name="Federspiel N.A."/>
            <person name="Kaul S."/>
            <person name="White O."/>
            <person name="Alonso J."/>
            <person name="Altafi H."/>
            <person name="Araujo R."/>
            <person name="Bowman C.L."/>
            <person name="Brooks S.Y."/>
            <person name="Buehler E."/>
            <person name="Chan A."/>
            <person name="Chao Q."/>
            <person name="Chen H."/>
            <person name="Cheuk R.F."/>
            <person name="Chin C.W."/>
            <person name="Chung M.K."/>
            <person name="Conn L."/>
            <person name="Conway A.B."/>
            <person name="Conway A.R."/>
            <person name="Creasy T.H."/>
            <person name="Dewar K."/>
            <person name="Dunn P."/>
            <person name="Etgu P."/>
            <person name="Feldblyum T.V."/>
            <person name="Feng J.-D."/>
            <person name="Fong B."/>
            <person name="Fujii C.Y."/>
            <person name="Gill J.E."/>
            <person name="Goldsmith A.D."/>
            <person name="Haas B."/>
            <person name="Hansen N.F."/>
            <person name="Hughes B."/>
            <person name="Huizar L."/>
            <person name="Hunter J.L."/>
            <person name="Jenkins J."/>
            <person name="Johnson-Hopson C."/>
            <person name="Khan S."/>
            <person name="Khaykin E."/>
            <person name="Kim C.J."/>
            <person name="Koo H.L."/>
            <person name="Kremenetskaia I."/>
            <person name="Kurtz D.B."/>
            <person name="Kwan A."/>
            <person name="Lam B."/>
            <person name="Langin-Hooper S."/>
            <person name="Lee A."/>
            <person name="Lee J.M."/>
            <person name="Lenz C.A."/>
            <person name="Li J.H."/>
            <person name="Li Y.-P."/>
            <person name="Lin X."/>
            <person name="Liu S.X."/>
            <person name="Liu Z.A."/>
            <person name="Luros J.S."/>
            <person name="Maiti R."/>
            <person name="Marziali A."/>
            <person name="Militscher J."/>
            <person name="Miranda M."/>
            <person name="Nguyen M."/>
            <person name="Nierman W.C."/>
            <person name="Osborne B.I."/>
            <person name="Pai G."/>
            <person name="Peterson J."/>
            <person name="Pham P.K."/>
            <person name="Rizzo M."/>
            <person name="Rooney T."/>
            <person name="Rowley D."/>
            <person name="Sakano H."/>
            <person name="Salzberg S.L."/>
            <person name="Schwartz J.R."/>
            <person name="Shinn P."/>
            <person name="Southwick A.M."/>
            <person name="Sun H."/>
            <person name="Tallon L.J."/>
            <person name="Tambunga G."/>
            <person name="Toriumi M.J."/>
            <person name="Town C.D."/>
            <person name="Utterback T."/>
            <person name="Van Aken S."/>
            <person name="Vaysberg M."/>
            <person name="Vysotskaia V.S."/>
            <person name="Walker M."/>
            <person name="Wu D."/>
            <person name="Yu G."/>
            <person name="Fraser C.M."/>
            <person name="Venter J.C."/>
            <person name="Davis R.W."/>
        </authorList>
    </citation>
    <scope>NUCLEOTIDE SEQUENCE [LARGE SCALE GENOMIC DNA]</scope>
    <source>
        <strain>cv. Columbia</strain>
    </source>
</reference>
<reference key="2">
    <citation type="journal article" date="2017" name="Plant J.">
        <title>Araport11: a complete reannotation of the Arabidopsis thaliana reference genome.</title>
        <authorList>
            <person name="Cheng C.Y."/>
            <person name="Krishnakumar V."/>
            <person name="Chan A.P."/>
            <person name="Thibaud-Nissen F."/>
            <person name="Schobel S."/>
            <person name="Town C.D."/>
        </authorList>
    </citation>
    <scope>GENOME REANNOTATION</scope>
    <source>
        <strain>cv. Columbia</strain>
    </source>
</reference>
<reference key="3">
    <citation type="journal article" date="2003" name="Science">
        <title>Empirical analysis of transcriptional activity in the Arabidopsis genome.</title>
        <authorList>
            <person name="Yamada K."/>
            <person name="Lim J."/>
            <person name="Dale J.M."/>
            <person name="Chen H."/>
            <person name="Shinn P."/>
            <person name="Palm C.J."/>
            <person name="Southwick A.M."/>
            <person name="Wu H.C."/>
            <person name="Kim C.J."/>
            <person name="Nguyen M."/>
            <person name="Pham P.K."/>
            <person name="Cheuk R.F."/>
            <person name="Karlin-Newmann G."/>
            <person name="Liu S.X."/>
            <person name="Lam B."/>
            <person name="Sakano H."/>
            <person name="Wu T."/>
            <person name="Yu G."/>
            <person name="Miranda M."/>
            <person name="Quach H.L."/>
            <person name="Tripp M."/>
            <person name="Chang C.H."/>
            <person name="Lee J.M."/>
            <person name="Toriumi M.J."/>
            <person name="Chan M.M."/>
            <person name="Tang C.C."/>
            <person name="Onodera C.S."/>
            <person name="Deng J.M."/>
            <person name="Akiyama K."/>
            <person name="Ansari Y."/>
            <person name="Arakawa T."/>
            <person name="Banh J."/>
            <person name="Banno F."/>
            <person name="Bowser L."/>
            <person name="Brooks S.Y."/>
            <person name="Carninci P."/>
            <person name="Chao Q."/>
            <person name="Choy N."/>
            <person name="Enju A."/>
            <person name="Goldsmith A.D."/>
            <person name="Gurjal M."/>
            <person name="Hansen N.F."/>
            <person name="Hayashizaki Y."/>
            <person name="Johnson-Hopson C."/>
            <person name="Hsuan V.W."/>
            <person name="Iida K."/>
            <person name="Karnes M."/>
            <person name="Khan S."/>
            <person name="Koesema E."/>
            <person name="Ishida J."/>
            <person name="Jiang P.X."/>
            <person name="Jones T."/>
            <person name="Kawai J."/>
            <person name="Kamiya A."/>
            <person name="Meyers C."/>
            <person name="Nakajima M."/>
            <person name="Narusaka M."/>
            <person name="Seki M."/>
            <person name="Sakurai T."/>
            <person name="Satou M."/>
            <person name="Tamse R."/>
            <person name="Vaysberg M."/>
            <person name="Wallender E.K."/>
            <person name="Wong C."/>
            <person name="Yamamura Y."/>
            <person name="Yuan S."/>
            <person name="Shinozaki K."/>
            <person name="Davis R.W."/>
            <person name="Theologis A."/>
            <person name="Ecker J.R."/>
        </authorList>
    </citation>
    <scope>NUCLEOTIDE SEQUENCE [LARGE SCALE MRNA]</scope>
    <source>
        <strain>cv. Columbia</strain>
    </source>
</reference>
<reference key="4">
    <citation type="journal article" date="2001" name="Cell Stress Chaperones">
        <title>Genomic analysis of the Hsp70 superfamily in Arabidopsis thaliana.</title>
        <authorList>
            <person name="Lin B.L."/>
            <person name="Wang J.S."/>
            <person name="Liu H.C."/>
            <person name="Chen R.W."/>
            <person name="Meyer Y."/>
            <person name="Barakat A."/>
            <person name="Delseny M."/>
        </authorList>
    </citation>
    <scope>GENE FAMILY</scope>
    <scope>NOMENCLATURE</scope>
</reference>
<reference key="5">
    <citation type="journal article" date="2001" name="Plant Physiol.">
        <title>Comprehensive expression profile analysis of the Arabidopsis Hsp70 gene family.</title>
        <authorList>
            <person name="Sung D.Y."/>
            <person name="Vierling E."/>
            <person name="Guy C.L."/>
        </authorList>
    </citation>
    <scope>DNAK GENE SUBFAMILY</scope>
    <scope>INDUCTION</scope>
</reference>
<reference key="6">
    <citation type="journal article" date="2005" name="Plant Physiol.">
        <title>Virus induction of heat shock protein 70 reflects a general response to protein accumulation in the plant cytosol.</title>
        <authorList>
            <person name="Aparicio F."/>
            <person name="Thomas C.L."/>
            <person name="Lederer C."/>
            <person name="Niu Y."/>
            <person name="Wang D."/>
            <person name="Maule A.J."/>
        </authorList>
    </citation>
    <scope>INDUCTION</scope>
</reference>